<name>MDTL_ECOSM</name>
<dbReference type="EMBL" id="CP000970">
    <property type="protein sequence ID" value="ACB16814.1"/>
    <property type="molecule type" value="Genomic_DNA"/>
</dbReference>
<dbReference type="RefSeq" id="WP_000086006.1">
    <property type="nucleotide sequence ID" value="NC_010498.1"/>
</dbReference>
<dbReference type="SMR" id="B1LL36"/>
<dbReference type="KEGG" id="ecm:EcSMS35_4077"/>
<dbReference type="HOGENOM" id="CLU_001265_47_1_6"/>
<dbReference type="Proteomes" id="UP000007011">
    <property type="component" value="Chromosome"/>
</dbReference>
<dbReference type="GO" id="GO:0005886">
    <property type="term" value="C:plasma membrane"/>
    <property type="evidence" value="ECO:0007669"/>
    <property type="project" value="UniProtKB-SubCell"/>
</dbReference>
<dbReference type="GO" id="GO:0022857">
    <property type="term" value="F:transmembrane transporter activity"/>
    <property type="evidence" value="ECO:0007669"/>
    <property type="project" value="UniProtKB-UniRule"/>
</dbReference>
<dbReference type="GO" id="GO:0046677">
    <property type="term" value="P:response to antibiotic"/>
    <property type="evidence" value="ECO:0007669"/>
    <property type="project" value="UniProtKB-KW"/>
</dbReference>
<dbReference type="CDD" id="cd17320">
    <property type="entry name" value="MFS_MdfA_MDR_like"/>
    <property type="match status" value="1"/>
</dbReference>
<dbReference type="FunFam" id="1.20.1720.10:FF:000003">
    <property type="entry name" value="Multidrug resistance protein MdtL"/>
    <property type="match status" value="1"/>
</dbReference>
<dbReference type="Gene3D" id="1.20.1720.10">
    <property type="entry name" value="Multidrug resistance protein D"/>
    <property type="match status" value="1"/>
</dbReference>
<dbReference type="HAMAP" id="MF_01530">
    <property type="entry name" value="MFS_MdtL"/>
    <property type="match status" value="1"/>
</dbReference>
<dbReference type="InterPro" id="IPR011701">
    <property type="entry name" value="MFS"/>
</dbReference>
<dbReference type="InterPro" id="IPR020846">
    <property type="entry name" value="MFS_dom"/>
</dbReference>
<dbReference type="InterPro" id="IPR050189">
    <property type="entry name" value="MFS_Efflux_Transporters"/>
</dbReference>
<dbReference type="InterPro" id="IPR036259">
    <property type="entry name" value="MFS_trans_sf"/>
</dbReference>
<dbReference type="InterPro" id="IPR023697">
    <property type="entry name" value="Multidrug-R_MdtL"/>
</dbReference>
<dbReference type="NCBIfam" id="NF007782">
    <property type="entry name" value="PRK10473.1"/>
    <property type="match status" value="1"/>
</dbReference>
<dbReference type="PANTHER" id="PTHR43124:SF3">
    <property type="entry name" value="CHLORAMPHENICOL EFFLUX PUMP RV0191"/>
    <property type="match status" value="1"/>
</dbReference>
<dbReference type="PANTHER" id="PTHR43124">
    <property type="entry name" value="PURINE EFFLUX PUMP PBUE"/>
    <property type="match status" value="1"/>
</dbReference>
<dbReference type="Pfam" id="PF07690">
    <property type="entry name" value="MFS_1"/>
    <property type="match status" value="1"/>
</dbReference>
<dbReference type="SUPFAM" id="SSF103473">
    <property type="entry name" value="MFS general substrate transporter"/>
    <property type="match status" value="1"/>
</dbReference>
<dbReference type="PROSITE" id="PS50850">
    <property type="entry name" value="MFS"/>
    <property type="match status" value="1"/>
</dbReference>
<organism>
    <name type="scientific">Escherichia coli (strain SMS-3-5 / SECEC)</name>
    <dbReference type="NCBI Taxonomy" id="439855"/>
    <lineage>
        <taxon>Bacteria</taxon>
        <taxon>Pseudomonadati</taxon>
        <taxon>Pseudomonadota</taxon>
        <taxon>Gammaproteobacteria</taxon>
        <taxon>Enterobacterales</taxon>
        <taxon>Enterobacteriaceae</taxon>
        <taxon>Escherichia</taxon>
    </lineage>
</organism>
<comment type="function">
    <text evidence="1">Confers resistance to chloramphenicol.</text>
</comment>
<comment type="subcellular location">
    <subcellularLocation>
        <location evidence="1">Cell inner membrane</location>
        <topology evidence="1">Multi-pass membrane protein</topology>
    </subcellularLocation>
</comment>
<comment type="similarity">
    <text evidence="1">Belongs to the major facilitator superfamily. DHA1 family. MdtL (TC 2.A.1.2.22) subfamily.</text>
</comment>
<evidence type="ECO:0000255" key="1">
    <source>
        <dbReference type="HAMAP-Rule" id="MF_01530"/>
    </source>
</evidence>
<protein>
    <recommendedName>
        <fullName evidence="1">Multidrug resistance protein MdtL</fullName>
    </recommendedName>
</protein>
<accession>B1LL36</accession>
<feature type="chain" id="PRO_1000200818" description="Multidrug resistance protein MdtL">
    <location>
        <begin position="1"/>
        <end position="391"/>
    </location>
</feature>
<feature type="transmembrane region" description="Helical" evidence="1">
    <location>
        <begin position="4"/>
        <end position="24"/>
    </location>
</feature>
<feature type="transmembrane region" description="Helical" evidence="1">
    <location>
        <begin position="42"/>
        <end position="62"/>
    </location>
</feature>
<feature type="transmembrane region" description="Helical" evidence="1">
    <location>
        <begin position="69"/>
        <end position="89"/>
    </location>
</feature>
<feature type="transmembrane region" description="Helical" evidence="1">
    <location>
        <begin position="93"/>
        <end position="113"/>
    </location>
</feature>
<feature type="transmembrane region" description="Helical" evidence="1">
    <location>
        <begin position="131"/>
        <end position="151"/>
    </location>
</feature>
<feature type="transmembrane region" description="Helical" evidence="1">
    <location>
        <begin position="158"/>
        <end position="178"/>
    </location>
</feature>
<feature type="transmembrane region" description="Helical" evidence="1">
    <location>
        <begin position="203"/>
        <end position="222"/>
    </location>
</feature>
<feature type="transmembrane region" description="Helical" evidence="1">
    <location>
        <begin position="245"/>
        <end position="265"/>
    </location>
</feature>
<feature type="transmembrane region" description="Helical" evidence="1">
    <location>
        <begin position="269"/>
        <end position="289"/>
    </location>
</feature>
<feature type="transmembrane region" description="Helical" evidence="1">
    <location>
        <begin position="293"/>
        <end position="313"/>
    </location>
</feature>
<feature type="transmembrane region" description="Helical" evidence="1">
    <location>
        <begin position="331"/>
        <end position="351"/>
    </location>
</feature>
<feature type="transmembrane region" description="Helical" evidence="1">
    <location>
        <begin position="356"/>
        <end position="376"/>
    </location>
</feature>
<gene>
    <name evidence="1" type="primary">mdtL</name>
    <name type="ordered locus">EcSMS35_4077</name>
</gene>
<reference key="1">
    <citation type="journal article" date="2008" name="J. Bacteriol.">
        <title>Insights into the environmental resistance gene pool from the genome sequence of the multidrug-resistant environmental isolate Escherichia coli SMS-3-5.</title>
        <authorList>
            <person name="Fricke W.F."/>
            <person name="Wright M.S."/>
            <person name="Lindell A.H."/>
            <person name="Harkins D.M."/>
            <person name="Baker-Austin C."/>
            <person name="Ravel J."/>
            <person name="Stepanauskas R."/>
        </authorList>
    </citation>
    <scope>NUCLEOTIDE SEQUENCE [LARGE SCALE GENOMIC DNA]</scope>
    <source>
        <strain>SMS-3-5 / SECEC</strain>
    </source>
</reference>
<sequence>MSRFLICSFALVLLYPAGIDMYLVGLPRIAADLNASEAQLHIAFSVYLAGMAAAMLFAGKVADRSGRKPVAIPGAALFIIASVFCSLAETSTLFLAGRFLQGLGAGCCYVVAFAILRDTLDDRRRAKVLSLLNGITCIIPVLAPVLGHLIMLKFPWQSLFWTMATMGIAVLMLSLFILKETRPAAPAASDKPRENSESLLNRFFLSRVVITTLSVSVILTFVNTSPVLLMEIMGFERGEYATIMALTAGVSMTVSFSTPFALGIFKPRTLMITSQVLFLAAGITLAVSPSHAVSLFGITLICAGFSVGFGVAMSQALGPFSLRAGVASSTLGIAQVCGSSLWIWLAAVVGIGAWNMLIGILIACSIVSLLLIMFVAPGRPVAAHEEIHHHA</sequence>
<keyword id="KW-0046">Antibiotic resistance</keyword>
<keyword id="KW-0997">Cell inner membrane</keyword>
<keyword id="KW-1003">Cell membrane</keyword>
<keyword id="KW-0472">Membrane</keyword>
<keyword id="KW-0812">Transmembrane</keyword>
<keyword id="KW-1133">Transmembrane helix</keyword>
<keyword id="KW-0813">Transport</keyword>
<proteinExistence type="inferred from homology"/>